<organism>
    <name type="scientific">Escherichia coli O17:K52:H18 (strain UMN026 / ExPEC)</name>
    <dbReference type="NCBI Taxonomy" id="585056"/>
    <lineage>
        <taxon>Bacteria</taxon>
        <taxon>Pseudomonadati</taxon>
        <taxon>Pseudomonadota</taxon>
        <taxon>Gammaproteobacteria</taxon>
        <taxon>Enterobacterales</taxon>
        <taxon>Enterobacteriaceae</taxon>
        <taxon>Escherichia</taxon>
    </lineage>
</organism>
<keyword id="KW-0963">Cytoplasm</keyword>
<keyword id="KW-0489">Methyltransferase</keyword>
<keyword id="KW-0694">RNA-binding</keyword>
<keyword id="KW-0698">rRNA processing</keyword>
<keyword id="KW-0949">S-adenosyl-L-methionine</keyword>
<keyword id="KW-0808">Transferase</keyword>
<accession>B7NDR0</accession>
<dbReference type="EC" id="2.1.1.176" evidence="1"/>
<dbReference type="EMBL" id="CU928163">
    <property type="protein sequence ID" value="CAR14910.1"/>
    <property type="molecule type" value="Genomic_DNA"/>
</dbReference>
<dbReference type="RefSeq" id="WP_001309796.1">
    <property type="nucleotide sequence ID" value="NC_011751.1"/>
</dbReference>
<dbReference type="RefSeq" id="YP_002414415.1">
    <property type="nucleotide sequence ID" value="NC_011751.1"/>
</dbReference>
<dbReference type="SMR" id="B7NDR0"/>
<dbReference type="STRING" id="585056.ECUMN_3762"/>
<dbReference type="KEGG" id="eum:ECUMN_3762"/>
<dbReference type="PATRIC" id="fig|585056.7.peg.3937"/>
<dbReference type="HOGENOM" id="CLU_005316_0_4_6"/>
<dbReference type="Proteomes" id="UP000007097">
    <property type="component" value="Chromosome"/>
</dbReference>
<dbReference type="GO" id="GO:0005829">
    <property type="term" value="C:cytosol"/>
    <property type="evidence" value="ECO:0007669"/>
    <property type="project" value="TreeGrafter"/>
</dbReference>
<dbReference type="GO" id="GO:0003723">
    <property type="term" value="F:RNA binding"/>
    <property type="evidence" value="ECO:0007669"/>
    <property type="project" value="UniProtKB-KW"/>
</dbReference>
<dbReference type="GO" id="GO:0009383">
    <property type="term" value="F:rRNA (cytosine-C5-)-methyltransferase activity"/>
    <property type="evidence" value="ECO:0007669"/>
    <property type="project" value="TreeGrafter"/>
</dbReference>
<dbReference type="GO" id="GO:0006355">
    <property type="term" value="P:regulation of DNA-templated transcription"/>
    <property type="evidence" value="ECO:0007669"/>
    <property type="project" value="InterPro"/>
</dbReference>
<dbReference type="GO" id="GO:0070475">
    <property type="term" value="P:rRNA base methylation"/>
    <property type="evidence" value="ECO:0007669"/>
    <property type="project" value="TreeGrafter"/>
</dbReference>
<dbReference type="CDD" id="cd02440">
    <property type="entry name" value="AdoMet_MTases"/>
    <property type="match status" value="1"/>
</dbReference>
<dbReference type="CDD" id="cd00620">
    <property type="entry name" value="Methyltransferase_Sun"/>
    <property type="match status" value="1"/>
</dbReference>
<dbReference type="FunFam" id="1.10.287.730:FF:000001">
    <property type="entry name" value="Ribosomal RNA small subunit methyltransferase B"/>
    <property type="match status" value="1"/>
</dbReference>
<dbReference type="FunFam" id="1.10.940.10:FF:000002">
    <property type="entry name" value="Ribosomal RNA small subunit methyltransferase B"/>
    <property type="match status" value="1"/>
</dbReference>
<dbReference type="FunFam" id="3.30.70.1170:FF:000002">
    <property type="entry name" value="Ribosomal RNA small subunit methyltransferase B"/>
    <property type="match status" value="1"/>
</dbReference>
<dbReference type="FunFam" id="3.40.50.150:FF:000022">
    <property type="entry name" value="Ribosomal RNA small subunit methyltransferase B"/>
    <property type="match status" value="1"/>
</dbReference>
<dbReference type="Gene3D" id="1.10.287.730">
    <property type="entry name" value="Helix hairpin bin"/>
    <property type="match status" value="1"/>
</dbReference>
<dbReference type="Gene3D" id="1.10.940.10">
    <property type="entry name" value="NusB-like"/>
    <property type="match status" value="1"/>
</dbReference>
<dbReference type="Gene3D" id="3.30.70.1170">
    <property type="entry name" value="Sun protein, domain 3"/>
    <property type="match status" value="1"/>
</dbReference>
<dbReference type="Gene3D" id="3.40.50.150">
    <property type="entry name" value="Vaccinia Virus protein VP39"/>
    <property type="match status" value="1"/>
</dbReference>
<dbReference type="HAMAP" id="MF_01856">
    <property type="entry name" value="16SrRNA_methyltr_B"/>
    <property type="match status" value="1"/>
</dbReference>
<dbReference type="InterPro" id="IPR049560">
    <property type="entry name" value="MeTrfase_RsmB-F_NOP2_cat"/>
</dbReference>
<dbReference type="InterPro" id="IPR001678">
    <property type="entry name" value="MeTrfase_RsmB-F_NOP2_dom"/>
</dbReference>
<dbReference type="InterPro" id="IPR035926">
    <property type="entry name" value="NusB-like_sf"/>
</dbReference>
<dbReference type="InterPro" id="IPR006027">
    <property type="entry name" value="NusB_RsmB_TIM44"/>
</dbReference>
<dbReference type="InterPro" id="IPR023267">
    <property type="entry name" value="RCMT"/>
</dbReference>
<dbReference type="InterPro" id="IPR004573">
    <property type="entry name" value="rRNA_ssu_MeTfrase_B"/>
</dbReference>
<dbReference type="InterPro" id="IPR023541">
    <property type="entry name" value="rRNA_ssu_MeTfrase_B_ent"/>
</dbReference>
<dbReference type="InterPro" id="IPR054728">
    <property type="entry name" value="RsmB-like_ferredoxin"/>
</dbReference>
<dbReference type="InterPro" id="IPR048019">
    <property type="entry name" value="RsmB-like_N"/>
</dbReference>
<dbReference type="InterPro" id="IPR018314">
    <property type="entry name" value="RsmB/NOL1/NOP2-like_CS"/>
</dbReference>
<dbReference type="InterPro" id="IPR029063">
    <property type="entry name" value="SAM-dependent_MTases_sf"/>
</dbReference>
<dbReference type="NCBIfam" id="NF008149">
    <property type="entry name" value="PRK10901.1"/>
    <property type="match status" value="1"/>
</dbReference>
<dbReference type="NCBIfam" id="NF011494">
    <property type="entry name" value="PRK14902.1"/>
    <property type="match status" value="1"/>
</dbReference>
<dbReference type="NCBIfam" id="TIGR00563">
    <property type="entry name" value="rsmB"/>
    <property type="match status" value="1"/>
</dbReference>
<dbReference type="PANTHER" id="PTHR22807:SF61">
    <property type="entry name" value="NOL1_NOP2_SUN FAMILY PROTEIN _ ANTITERMINATION NUSB DOMAIN-CONTAINING PROTEIN"/>
    <property type="match status" value="1"/>
</dbReference>
<dbReference type="PANTHER" id="PTHR22807">
    <property type="entry name" value="NOP2 YEAST -RELATED NOL1/NOP2/FMU SUN DOMAIN-CONTAINING"/>
    <property type="match status" value="1"/>
</dbReference>
<dbReference type="Pfam" id="PF01189">
    <property type="entry name" value="Methyltr_RsmB-F"/>
    <property type="match status" value="1"/>
</dbReference>
<dbReference type="Pfam" id="PF01029">
    <property type="entry name" value="NusB"/>
    <property type="match status" value="1"/>
</dbReference>
<dbReference type="Pfam" id="PF22458">
    <property type="entry name" value="RsmF-B_ferredox"/>
    <property type="match status" value="1"/>
</dbReference>
<dbReference type="PRINTS" id="PR02008">
    <property type="entry name" value="RCMTFAMILY"/>
</dbReference>
<dbReference type="SUPFAM" id="SSF48013">
    <property type="entry name" value="NusB-like"/>
    <property type="match status" value="1"/>
</dbReference>
<dbReference type="SUPFAM" id="SSF53335">
    <property type="entry name" value="S-adenosyl-L-methionine-dependent methyltransferases"/>
    <property type="match status" value="1"/>
</dbReference>
<dbReference type="PROSITE" id="PS01153">
    <property type="entry name" value="NOL1_NOP2_SUN"/>
    <property type="match status" value="1"/>
</dbReference>
<dbReference type="PROSITE" id="PS51686">
    <property type="entry name" value="SAM_MT_RSMB_NOP"/>
    <property type="match status" value="1"/>
</dbReference>
<protein>
    <recommendedName>
        <fullName evidence="1">Ribosomal RNA small subunit methyltransferase B</fullName>
        <ecNumber evidence="1">2.1.1.176</ecNumber>
    </recommendedName>
    <alternativeName>
        <fullName evidence="1">16S rRNA m5C967 methyltransferase</fullName>
    </alternativeName>
    <alternativeName>
        <fullName evidence="1">rRNA (cytosine-C(5)-)-methyltransferase RsmB</fullName>
    </alternativeName>
</protein>
<evidence type="ECO:0000255" key="1">
    <source>
        <dbReference type="HAMAP-Rule" id="MF_01856"/>
    </source>
</evidence>
<sequence>MKKQRNLRSMAAQAVEQVVEQGQSLSNILPPLQQKVSDKDKALLQELCFGVLRTLSQLDWLINKLMARPMTGKQRTVHYLIMVGLYQLLYTRIPPHAALAETVEGAVAIKRPQLKGLINGVLRQFQRQQEELLAEFNASDACYLHPSWLLKRLQKAYPEQWQSIVEANNQRPPMWLRVNRTHHSRDSWLALLDEAGMKGFPHADYPDAVRLETPAPVHVLPGFEEGWVTVQDASAQGCMAWLAPQNGEHILDLCAAPGGKTTHILEVAPEAQVVAVDIDEQRLSRVYDNLKRLGMKATVKQGDGRYPSQWCGEQQFDRILLDAPCSATGVIRRHPDIKWLRRDRDIPELAQLQSEILDAIWPHLKSGGTLIYATCSVLPEENSLQIKAFLQRTADAELCETGTPEQPGKQNLPGAEEGDGFFYAKLIKK</sequence>
<reference key="1">
    <citation type="journal article" date="2009" name="PLoS Genet.">
        <title>Organised genome dynamics in the Escherichia coli species results in highly diverse adaptive paths.</title>
        <authorList>
            <person name="Touchon M."/>
            <person name="Hoede C."/>
            <person name="Tenaillon O."/>
            <person name="Barbe V."/>
            <person name="Baeriswyl S."/>
            <person name="Bidet P."/>
            <person name="Bingen E."/>
            <person name="Bonacorsi S."/>
            <person name="Bouchier C."/>
            <person name="Bouvet O."/>
            <person name="Calteau A."/>
            <person name="Chiapello H."/>
            <person name="Clermont O."/>
            <person name="Cruveiller S."/>
            <person name="Danchin A."/>
            <person name="Diard M."/>
            <person name="Dossat C."/>
            <person name="Karoui M.E."/>
            <person name="Frapy E."/>
            <person name="Garry L."/>
            <person name="Ghigo J.M."/>
            <person name="Gilles A.M."/>
            <person name="Johnson J."/>
            <person name="Le Bouguenec C."/>
            <person name="Lescat M."/>
            <person name="Mangenot S."/>
            <person name="Martinez-Jehanne V."/>
            <person name="Matic I."/>
            <person name="Nassif X."/>
            <person name="Oztas S."/>
            <person name="Petit M.A."/>
            <person name="Pichon C."/>
            <person name="Rouy Z."/>
            <person name="Ruf C.S."/>
            <person name="Schneider D."/>
            <person name="Tourret J."/>
            <person name="Vacherie B."/>
            <person name="Vallenet D."/>
            <person name="Medigue C."/>
            <person name="Rocha E.P.C."/>
            <person name="Denamur E."/>
        </authorList>
    </citation>
    <scope>NUCLEOTIDE SEQUENCE [LARGE SCALE GENOMIC DNA]</scope>
    <source>
        <strain>UMN026 / ExPEC</strain>
    </source>
</reference>
<name>RSMB_ECOLU</name>
<proteinExistence type="inferred from homology"/>
<gene>
    <name evidence="1" type="primary">rsmB</name>
    <name evidence="1" type="synonym">sun</name>
    <name type="ordered locus">ECUMN_3762</name>
</gene>
<comment type="function">
    <text evidence="1">Specifically methylates the cytosine at position 967 (m5C967) of 16S rRNA.</text>
</comment>
<comment type="catalytic activity">
    <reaction evidence="1">
        <text>cytidine(967) in 16S rRNA + S-adenosyl-L-methionine = 5-methylcytidine(967) in 16S rRNA + S-adenosyl-L-homocysteine + H(+)</text>
        <dbReference type="Rhea" id="RHEA:42748"/>
        <dbReference type="Rhea" id="RHEA-COMP:10219"/>
        <dbReference type="Rhea" id="RHEA-COMP:10220"/>
        <dbReference type="ChEBI" id="CHEBI:15378"/>
        <dbReference type="ChEBI" id="CHEBI:57856"/>
        <dbReference type="ChEBI" id="CHEBI:59789"/>
        <dbReference type="ChEBI" id="CHEBI:74483"/>
        <dbReference type="ChEBI" id="CHEBI:82748"/>
        <dbReference type="EC" id="2.1.1.176"/>
    </reaction>
</comment>
<comment type="subcellular location">
    <subcellularLocation>
        <location evidence="1">Cytoplasm</location>
    </subcellularLocation>
</comment>
<comment type="similarity">
    <text evidence="1">Belongs to the class I-like SAM-binding methyltransferase superfamily. RsmB/NOP family.</text>
</comment>
<feature type="chain" id="PRO_1000188694" description="Ribosomal RNA small subunit methyltransferase B">
    <location>
        <begin position="1"/>
        <end position="429"/>
    </location>
</feature>
<feature type="active site" description="Nucleophile" evidence="1">
    <location>
        <position position="375"/>
    </location>
</feature>
<feature type="binding site" evidence="1">
    <location>
        <begin position="254"/>
        <end position="260"/>
    </location>
    <ligand>
        <name>S-adenosyl-L-methionine</name>
        <dbReference type="ChEBI" id="CHEBI:59789"/>
    </ligand>
</feature>
<feature type="binding site" evidence="1">
    <location>
        <position position="277"/>
    </location>
    <ligand>
        <name>S-adenosyl-L-methionine</name>
        <dbReference type="ChEBI" id="CHEBI:59789"/>
    </ligand>
</feature>
<feature type="binding site" evidence="1">
    <location>
        <position position="303"/>
    </location>
    <ligand>
        <name>S-adenosyl-L-methionine</name>
        <dbReference type="ChEBI" id="CHEBI:59789"/>
    </ligand>
</feature>
<feature type="binding site" evidence="1">
    <location>
        <position position="322"/>
    </location>
    <ligand>
        <name>S-adenosyl-L-methionine</name>
        <dbReference type="ChEBI" id="CHEBI:59789"/>
    </ligand>
</feature>